<protein>
    <recommendedName>
        <fullName>Perilipin-1</fullName>
    </recommendedName>
    <alternativeName>
        <fullName>Lipid droplet-associated protein</fullName>
    </alternativeName>
</protein>
<feature type="chain" id="PRO_0000099886" description="Perilipin-1">
    <location>
        <begin position="1"/>
        <end position="517"/>
    </location>
</feature>
<feature type="region of interest" description="Disordered" evidence="4">
    <location>
        <begin position="197"/>
        <end position="217"/>
    </location>
</feature>
<feature type="region of interest" description="Disordered" evidence="4">
    <location>
        <begin position="285"/>
        <end position="321"/>
    </location>
</feature>
<feature type="region of interest" description="Required for interaction with CIDEC" evidence="1">
    <location>
        <begin position="291"/>
        <end position="322"/>
    </location>
</feature>
<feature type="region of interest" description="Disordered" evidence="4">
    <location>
        <begin position="415"/>
        <end position="495"/>
    </location>
</feature>
<feature type="compositionally biased region" description="Acidic residues" evidence="4">
    <location>
        <begin position="299"/>
        <end position="319"/>
    </location>
</feature>
<feature type="compositionally biased region" description="Basic and acidic residues" evidence="4">
    <location>
        <begin position="483"/>
        <end position="492"/>
    </location>
</feature>
<feature type="modified residue" description="Phosphoserine" evidence="2">
    <location>
        <position position="81"/>
    </location>
</feature>
<feature type="modified residue" description="Phosphothreonine" evidence="3">
    <location>
        <position position="85"/>
    </location>
</feature>
<feature type="modified residue" description="Phosphoserine" evidence="3">
    <location>
        <position position="126"/>
    </location>
</feature>
<feature type="modified residue" description="Phosphoserine" evidence="8">
    <location>
        <position position="130"/>
    </location>
</feature>
<feature type="modified residue" description="Phosphoserine" evidence="3">
    <location>
        <position position="132"/>
    </location>
</feature>
<feature type="modified residue" description="Phosphoserine" evidence="3">
    <location>
        <position position="137"/>
    </location>
</feature>
<feature type="modified residue" description="Phosphoserine" evidence="8">
    <location>
        <position position="174"/>
    </location>
</feature>
<feature type="modified residue" description="Phosphothreonine" evidence="3">
    <location>
        <position position="224"/>
    </location>
</feature>
<feature type="modified residue" description="Phosphothreonine" evidence="8">
    <location>
        <position position="299"/>
    </location>
</feature>
<feature type="modified residue" description="Phosphothreonine" evidence="8">
    <location>
        <position position="301"/>
    </location>
</feature>
<feature type="modified residue" description="Phosphoserine" evidence="8">
    <location>
        <position position="315"/>
    </location>
</feature>
<feature type="modified residue" description="Phosphoserine" evidence="8">
    <location>
        <position position="385"/>
    </location>
</feature>
<feature type="modified residue" description="Phosphoserine" evidence="8">
    <location>
        <position position="387"/>
    </location>
</feature>
<feature type="modified residue" description="Phosphoserine" evidence="8">
    <location>
        <position position="411"/>
    </location>
</feature>
<feature type="modified residue" description="Phosphoserine" evidence="2">
    <location>
        <position position="434"/>
    </location>
</feature>
<feature type="modified residue" description="Phosphoserine" evidence="8">
    <location>
        <position position="436"/>
    </location>
</feature>
<feature type="modified residue" description="Phosphoserine" evidence="8">
    <location>
        <position position="440"/>
    </location>
</feature>
<feature type="modified residue" description="Phosphoserine" evidence="8">
    <location>
        <position position="460"/>
    </location>
</feature>
<feature type="modified residue" description="Phosphoserine" evidence="2">
    <location>
        <position position="492"/>
    </location>
</feature>
<feature type="modified residue" description="Phosphoserine" evidence="3">
    <location>
        <position position="494"/>
    </location>
</feature>
<feature type="splice variant" id="VSP_004662" description="In isoform B." evidence="6">
    <original>LPRLSLMEPESEFQDI</original>
    <variation>VSPAPGPPSDSQGRFD</variation>
    <location>
        <begin position="407"/>
        <end position="422"/>
    </location>
</feature>
<feature type="splice variant" id="VSP_004663" description="In isoform B." evidence="6">
    <location>
        <begin position="423"/>
        <end position="517"/>
    </location>
</feature>
<feature type="modified residue" description="Phosphoserine" evidence="8">
    <location sequence="P43884-2">
        <position position="408"/>
    </location>
</feature>
<dbReference type="EMBL" id="L26043">
    <property type="protein sequence ID" value="AAA41830.1"/>
    <property type="molecule type" value="mRNA"/>
</dbReference>
<dbReference type="EMBL" id="L26044">
    <property type="protein sequence ID" value="AAA41831.1"/>
    <property type="molecule type" value="mRNA"/>
</dbReference>
<dbReference type="PIR" id="A49413">
    <property type="entry name" value="A49413"/>
</dbReference>
<dbReference type="FunCoup" id="P43884">
    <property type="interactions" value="10"/>
</dbReference>
<dbReference type="STRING" id="10116.ENSRNOP00000068793"/>
<dbReference type="GlyGen" id="P43884">
    <property type="glycosylation" value="1 site, 1 O-linked glycan (1 site)"/>
</dbReference>
<dbReference type="iPTMnet" id="P43884"/>
<dbReference type="PhosphoSitePlus" id="P43884"/>
<dbReference type="PaxDb" id="10116-ENSRNOP00000061809"/>
<dbReference type="UCSC" id="RGD:3351">
    <molecule id="P43884-1"/>
    <property type="organism name" value="rat"/>
</dbReference>
<dbReference type="AGR" id="RGD:3351"/>
<dbReference type="RGD" id="3351">
    <property type="gene designation" value="Plin1"/>
</dbReference>
<dbReference type="eggNOG" id="ENOG502RY3Q">
    <property type="taxonomic scope" value="Eukaryota"/>
</dbReference>
<dbReference type="InParanoid" id="P43884"/>
<dbReference type="PRO" id="PR:P43884"/>
<dbReference type="Proteomes" id="UP000002494">
    <property type="component" value="Unplaced"/>
</dbReference>
<dbReference type="GO" id="GO:0071944">
    <property type="term" value="C:cell periphery"/>
    <property type="evidence" value="ECO:0000266"/>
    <property type="project" value="RGD"/>
</dbReference>
<dbReference type="GO" id="GO:0005829">
    <property type="term" value="C:cytosol"/>
    <property type="evidence" value="ECO:0000266"/>
    <property type="project" value="RGD"/>
</dbReference>
<dbReference type="GO" id="GO:0005783">
    <property type="term" value="C:endoplasmic reticulum"/>
    <property type="evidence" value="ECO:0007669"/>
    <property type="project" value="UniProtKB-SubCell"/>
</dbReference>
<dbReference type="GO" id="GO:0005811">
    <property type="term" value="C:lipid droplet"/>
    <property type="evidence" value="ECO:0000314"/>
    <property type="project" value="RGD"/>
</dbReference>
<dbReference type="GO" id="GO:0070417">
    <property type="term" value="P:cellular response to cold"/>
    <property type="evidence" value="ECO:0000266"/>
    <property type="project" value="RGD"/>
</dbReference>
<dbReference type="GO" id="GO:0016042">
    <property type="term" value="P:lipid catabolic process"/>
    <property type="evidence" value="ECO:0000266"/>
    <property type="project" value="RGD"/>
</dbReference>
<dbReference type="GO" id="GO:0050995">
    <property type="term" value="P:negative regulation of lipid catabolic process"/>
    <property type="evidence" value="ECO:0000266"/>
    <property type="project" value="RGD"/>
</dbReference>
<dbReference type="InterPro" id="IPR004279">
    <property type="entry name" value="Perilipin"/>
</dbReference>
<dbReference type="InterPro" id="IPR042998">
    <property type="entry name" value="PLIN1"/>
</dbReference>
<dbReference type="PANTHER" id="PTHR47138">
    <property type="entry name" value="PERILIPIN-1"/>
    <property type="match status" value="1"/>
</dbReference>
<dbReference type="PANTHER" id="PTHR47138:SF1">
    <property type="entry name" value="PERILIPIN-1"/>
    <property type="match status" value="1"/>
</dbReference>
<dbReference type="Pfam" id="PF03036">
    <property type="entry name" value="Perilipin"/>
    <property type="match status" value="1"/>
</dbReference>
<dbReference type="PIRSF" id="PIRSF036881">
    <property type="entry name" value="PAT"/>
    <property type="match status" value="1"/>
</dbReference>
<comment type="function">
    <text evidence="1">Modulator of adipocyte lipid metabolism. Coats lipid storage droplets to protect them from breakdown by hormone-sensitive lipase (HSL). Its absence may result in leanness. Plays a role in unilocular lipid droplet formation by activating CIDEC. Their interaction promotes lipid droplet enlargement and directional net neutral lipid transfer. May modulate lipolysis and triglyceride levels (By similarity).</text>
</comment>
<comment type="subunit">
    <text evidence="2 3">Interacts with ABHD5 (By similarity). Interacts with CIDEC. Interacts with AQP7 (By similarity).</text>
</comment>
<comment type="subcellular location">
    <subcellularLocation>
        <location evidence="2">Endoplasmic reticulum</location>
    </subcellularLocation>
    <subcellularLocation>
        <location evidence="2">Lipid droplet</location>
    </subcellularLocation>
    <text evidence="2">Lipid droplet surface-associated.</text>
</comment>
<comment type="alternative products">
    <event type="alternative splicing"/>
    <isoform>
        <id>P43884-1</id>
        <name>A</name>
        <name>PERIA</name>
        <sequence type="displayed"/>
    </isoform>
    <isoform>
        <id>P43884-2</id>
        <name>B</name>
        <name>PERIB</name>
        <sequence type="described" ref="VSP_004662 VSP_004663"/>
    </isoform>
</comment>
<comment type="tissue specificity">
    <text>Adipocytes.</text>
</comment>
<comment type="PTM">
    <text evidence="5">Major cAMP-dependent protein kinase substrate in adipocytes, also dephosphorylated by PP1. When phosphorylated, may be maximally sensitive to HSL. When unphosphorylated, may play a role in the inhibition of lipolysis, by acting as a barrier in lipid droplet.</text>
</comment>
<comment type="PTM">
    <text>The N-terminus is blocked.</text>
</comment>
<comment type="similarity">
    <text evidence="7">Belongs to the perilipin family.</text>
</comment>
<comment type="online information" name="Protein Spotlight">
    <link uri="https://www.proteinspotlight.org/back_issues/010"/>
    <text>Fat, wonderful fat - Issue 10 of May 2001</text>
</comment>
<keyword id="KW-0025">Alternative splicing</keyword>
<keyword id="KW-0903">Direct protein sequencing</keyword>
<keyword id="KW-0256">Endoplasmic reticulum</keyword>
<keyword id="KW-0551">Lipid droplet</keyword>
<keyword id="KW-0443">Lipid metabolism</keyword>
<keyword id="KW-0597">Phosphoprotein</keyword>
<keyword id="KW-1185">Reference proteome</keyword>
<evidence type="ECO:0000250" key="1"/>
<evidence type="ECO:0000250" key="2">
    <source>
        <dbReference type="UniProtKB" id="O60240"/>
    </source>
</evidence>
<evidence type="ECO:0000250" key="3">
    <source>
        <dbReference type="UniProtKB" id="Q8CGN5"/>
    </source>
</evidence>
<evidence type="ECO:0000256" key="4">
    <source>
        <dbReference type="SAM" id="MobiDB-lite"/>
    </source>
</evidence>
<evidence type="ECO:0000269" key="5">
    <source>
    </source>
</evidence>
<evidence type="ECO:0000303" key="6">
    <source>
    </source>
</evidence>
<evidence type="ECO:0000305" key="7"/>
<evidence type="ECO:0007744" key="8">
    <source>
    </source>
</evidence>
<sequence length="517" mass="55614">MSMNKGPTLLDGDLPEQENVLQRVLQLPVVSGTCECFQKTYNSTKEAHPLVASVCNAYEKGVQGASNLAAWSMEPVVRRLSTQFTAANELACRGLDHLEEKIPALQYPPEKIASELKGTISTRLRSARNSISVPIASTSDKVLGATLAGCELALGMAKETAEYAANTRVGRLASGGADLALGSIEKVVEYLLPPDKVESAPSSGRQKTQKAPKAKPSLLRRVSTLANTLSRHTMQTTARALKRGHSLAMWIPGVAPLSSLAQWGASAAMQVVSRRQSEVRVPWLHNLAASKDENHEDQTDTEGEETDEEEEEEESEAEENVLREVTALPTPLGFLGGVVHTVQKTLQNTISAVTWAPAAVLGTVGRILHLTPAQAVSSTKGRAMSLSDALKGVTDNVVDTVVHYVPLPRLSLMEPESEFQDIDNPPAEVERKGSGSRPASPESTARPGQPRAACAVRGLSAPSCPDLDDKTETSARPGLLAMPREKPARRVSDSFFRPSVMEPILGRTQYSQLRKKS</sequence>
<accession>P43884</accession>
<proteinExistence type="evidence at protein level"/>
<reference key="1">
    <citation type="journal article" date="1993" name="Proc. Natl. Acad. Sci. U.S.A.">
        <title>Isolation of cDNAs for perilipins A and B: sequence and expression of lipid droplet-associated proteins of adipocytes.</title>
        <authorList>
            <person name="Greenberg A.S."/>
            <person name="Egan J.J."/>
            <person name="Wek S.A."/>
            <person name="Moos M.C. Jr."/>
            <person name="Londos C."/>
            <person name="Kimmel A.R."/>
        </authorList>
    </citation>
    <scope>NUCLEOTIDE SEQUENCE [MRNA] (ISOFORMS A AND B)</scope>
    <scope>PARTIAL PROTEIN SEQUENCE</scope>
    <source>
        <strain>Sprague-Dawley</strain>
        <tissue>Adipocyte</tissue>
    </source>
</reference>
<reference key="2">
    <citation type="journal article" date="1998" name="FEBS Lett.">
        <title>Dephosphorylation of perilipin by protein phosphatases present in rat adipocytes.</title>
        <authorList>
            <person name="Clifford G.M."/>
            <person name="McCormick D.K."/>
            <person name="Londos C."/>
            <person name="Vernon R.G."/>
            <person name="Yeaman S.J."/>
        </authorList>
    </citation>
    <scope>PHOSPHORYLATION</scope>
</reference>
<reference key="3">
    <citation type="journal article" date="2012" name="Nat. Commun.">
        <title>Quantitative maps of protein phosphorylation sites across 14 different rat organs and tissues.</title>
        <authorList>
            <person name="Lundby A."/>
            <person name="Secher A."/>
            <person name="Lage K."/>
            <person name="Nordsborg N.B."/>
            <person name="Dmytriyev A."/>
            <person name="Lundby C."/>
            <person name="Olsen J.V."/>
        </authorList>
    </citation>
    <scope>PHOSPHORYLATION [LARGE SCALE ANALYSIS] AT SER-130; SER-174; THR-299; THR-301; SER-315; SER-385; SER-387; SER-411; SER-436; SER-440 AND SER-460</scope>
    <scope>PHOSPHORYLATION [LARGE SCALE ANALYSIS] AT SER-408 (ISOFORM B)</scope>
    <scope>IDENTIFICATION BY MASS SPECTROMETRY [LARGE SCALE ANALYSIS]</scope>
</reference>
<gene>
    <name type="primary">Plin1</name>
    <name type="synonym">Peri</name>
    <name type="synonym">Plin</name>
</gene>
<name>PLIN1_RAT</name>
<organism>
    <name type="scientific">Rattus norvegicus</name>
    <name type="common">Rat</name>
    <dbReference type="NCBI Taxonomy" id="10116"/>
    <lineage>
        <taxon>Eukaryota</taxon>
        <taxon>Metazoa</taxon>
        <taxon>Chordata</taxon>
        <taxon>Craniata</taxon>
        <taxon>Vertebrata</taxon>
        <taxon>Euteleostomi</taxon>
        <taxon>Mammalia</taxon>
        <taxon>Eutheria</taxon>
        <taxon>Euarchontoglires</taxon>
        <taxon>Glires</taxon>
        <taxon>Rodentia</taxon>
        <taxon>Myomorpha</taxon>
        <taxon>Muroidea</taxon>
        <taxon>Muridae</taxon>
        <taxon>Murinae</taxon>
        <taxon>Rattus</taxon>
    </lineage>
</organism>